<organism>
    <name type="scientific">Escherichia coli O81 (strain ED1a)</name>
    <dbReference type="NCBI Taxonomy" id="585397"/>
    <lineage>
        <taxon>Bacteria</taxon>
        <taxon>Pseudomonadati</taxon>
        <taxon>Pseudomonadota</taxon>
        <taxon>Gammaproteobacteria</taxon>
        <taxon>Enterobacterales</taxon>
        <taxon>Enterobacteriaceae</taxon>
        <taxon>Escherichia</taxon>
    </lineage>
</organism>
<evidence type="ECO:0000255" key="1">
    <source>
        <dbReference type="HAMAP-Rule" id="MF_00406"/>
    </source>
</evidence>
<dbReference type="EC" id="4.2.1.59" evidence="1"/>
<dbReference type="EMBL" id="CU928162">
    <property type="protein sequence ID" value="CAR06405.1"/>
    <property type="molecule type" value="Genomic_DNA"/>
</dbReference>
<dbReference type="RefSeq" id="WP_000210739.1">
    <property type="nucleotide sequence ID" value="NC_011745.1"/>
</dbReference>
<dbReference type="SMR" id="B7MP40"/>
<dbReference type="GeneID" id="93777245"/>
<dbReference type="KEGG" id="ecq:ECED1_0186"/>
<dbReference type="HOGENOM" id="CLU_078912_1_0_6"/>
<dbReference type="Proteomes" id="UP000000748">
    <property type="component" value="Chromosome"/>
</dbReference>
<dbReference type="GO" id="GO:0005737">
    <property type="term" value="C:cytoplasm"/>
    <property type="evidence" value="ECO:0007669"/>
    <property type="project" value="UniProtKB-SubCell"/>
</dbReference>
<dbReference type="GO" id="GO:0016020">
    <property type="term" value="C:membrane"/>
    <property type="evidence" value="ECO:0007669"/>
    <property type="project" value="GOC"/>
</dbReference>
<dbReference type="GO" id="GO:0019171">
    <property type="term" value="F:(3R)-hydroxyacyl-[acyl-carrier-protein] dehydratase activity"/>
    <property type="evidence" value="ECO:0007669"/>
    <property type="project" value="UniProtKB-EC"/>
</dbReference>
<dbReference type="GO" id="GO:0006633">
    <property type="term" value="P:fatty acid biosynthetic process"/>
    <property type="evidence" value="ECO:0007669"/>
    <property type="project" value="UniProtKB-UniRule"/>
</dbReference>
<dbReference type="GO" id="GO:0009245">
    <property type="term" value="P:lipid A biosynthetic process"/>
    <property type="evidence" value="ECO:0007669"/>
    <property type="project" value="UniProtKB-UniRule"/>
</dbReference>
<dbReference type="CDD" id="cd01288">
    <property type="entry name" value="FabZ"/>
    <property type="match status" value="1"/>
</dbReference>
<dbReference type="FunFam" id="3.10.129.10:FF:000001">
    <property type="entry name" value="3-hydroxyacyl-[acyl-carrier-protein] dehydratase FabZ"/>
    <property type="match status" value="1"/>
</dbReference>
<dbReference type="Gene3D" id="3.10.129.10">
    <property type="entry name" value="Hotdog Thioesterase"/>
    <property type="match status" value="1"/>
</dbReference>
<dbReference type="HAMAP" id="MF_00406">
    <property type="entry name" value="FabZ"/>
    <property type="match status" value="1"/>
</dbReference>
<dbReference type="InterPro" id="IPR013114">
    <property type="entry name" value="FabA_FabZ"/>
</dbReference>
<dbReference type="InterPro" id="IPR010084">
    <property type="entry name" value="FabZ"/>
</dbReference>
<dbReference type="InterPro" id="IPR029069">
    <property type="entry name" value="HotDog_dom_sf"/>
</dbReference>
<dbReference type="NCBIfam" id="TIGR01750">
    <property type="entry name" value="fabZ"/>
    <property type="match status" value="1"/>
</dbReference>
<dbReference type="NCBIfam" id="NF000582">
    <property type="entry name" value="PRK00006.1"/>
    <property type="match status" value="1"/>
</dbReference>
<dbReference type="PANTHER" id="PTHR30272">
    <property type="entry name" value="3-HYDROXYACYL-[ACYL-CARRIER-PROTEIN] DEHYDRATASE"/>
    <property type="match status" value="1"/>
</dbReference>
<dbReference type="PANTHER" id="PTHR30272:SF1">
    <property type="entry name" value="3-HYDROXYACYL-[ACYL-CARRIER-PROTEIN] DEHYDRATASE"/>
    <property type="match status" value="1"/>
</dbReference>
<dbReference type="Pfam" id="PF07977">
    <property type="entry name" value="FabA"/>
    <property type="match status" value="1"/>
</dbReference>
<dbReference type="SUPFAM" id="SSF54637">
    <property type="entry name" value="Thioesterase/thiol ester dehydrase-isomerase"/>
    <property type="match status" value="1"/>
</dbReference>
<sequence length="151" mass="17033">MTTNTHTLQIEEILELLPHRFPFLLVDRVLDFEEGRFLRAVKNVSVNEPFFQGHFPGKPIFPGVLILEAMAQATGILAFKSVGKLEPGELYYFAGIDEARFKRPVVPGDQMIMEVTFEKTRRGLTRFKGVALVDGKVVCEATMMCARSREA</sequence>
<reference key="1">
    <citation type="journal article" date="2009" name="PLoS Genet.">
        <title>Organised genome dynamics in the Escherichia coli species results in highly diverse adaptive paths.</title>
        <authorList>
            <person name="Touchon M."/>
            <person name="Hoede C."/>
            <person name="Tenaillon O."/>
            <person name="Barbe V."/>
            <person name="Baeriswyl S."/>
            <person name="Bidet P."/>
            <person name="Bingen E."/>
            <person name="Bonacorsi S."/>
            <person name="Bouchier C."/>
            <person name="Bouvet O."/>
            <person name="Calteau A."/>
            <person name="Chiapello H."/>
            <person name="Clermont O."/>
            <person name="Cruveiller S."/>
            <person name="Danchin A."/>
            <person name="Diard M."/>
            <person name="Dossat C."/>
            <person name="Karoui M.E."/>
            <person name="Frapy E."/>
            <person name="Garry L."/>
            <person name="Ghigo J.M."/>
            <person name="Gilles A.M."/>
            <person name="Johnson J."/>
            <person name="Le Bouguenec C."/>
            <person name="Lescat M."/>
            <person name="Mangenot S."/>
            <person name="Martinez-Jehanne V."/>
            <person name="Matic I."/>
            <person name="Nassif X."/>
            <person name="Oztas S."/>
            <person name="Petit M.A."/>
            <person name="Pichon C."/>
            <person name="Rouy Z."/>
            <person name="Ruf C.S."/>
            <person name="Schneider D."/>
            <person name="Tourret J."/>
            <person name="Vacherie B."/>
            <person name="Vallenet D."/>
            <person name="Medigue C."/>
            <person name="Rocha E.P.C."/>
            <person name="Denamur E."/>
        </authorList>
    </citation>
    <scope>NUCLEOTIDE SEQUENCE [LARGE SCALE GENOMIC DNA]</scope>
    <source>
        <strain>ED1a</strain>
    </source>
</reference>
<keyword id="KW-0963">Cytoplasm</keyword>
<keyword id="KW-0441">Lipid A biosynthesis</keyword>
<keyword id="KW-0444">Lipid biosynthesis</keyword>
<keyword id="KW-0443">Lipid metabolism</keyword>
<keyword id="KW-0456">Lyase</keyword>
<accession>B7MP40</accession>
<name>FABZ_ECO81</name>
<comment type="function">
    <text evidence="1">Involved in unsaturated fatty acids biosynthesis. Catalyzes the dehydration of short chain beta-hydroxyacyl-ACPs and long chain saturated and unsaturated beta-hydroxyacyl-ACPs.</text>
</comment>
<comment type="catalytic activity">
    <reaction evidence="1">
        <text>a (3R)-hydroxyacyl-[ACP] = a (2E)-enoyl-[ACP] + H2O</text>
        <dbReference type="Rhea" id="RHEA:13097"/>
        <dbReference type="Rhea" id="RHEA-COMP:9925"/>
        <dbReference type="Rhea" id="RHEA-COMP:9945"/>
        <dbReference type="ChEBI" id="CHEBI:15377"/>
        <dbReference type="ChEBI" id="CHEBI:78784"/>
        <dbReference type="ChEBI" id="CHEBI:78827"/>
        <dbReference type="EC" id="4.2.1.59"/>
    </reaction>
</comment>
<comment type="subunit">
    <text evidence="1">Oligomer.</text>
</comment>
<comment type="subcellular location">
    <subcellularLocation>
        <location evidence="1">Cytoplasm</location>
    </subcellularLocation>
</comment>
<comment type="PTM">
    <text evidence="1">The N-terminus is blocked.</text>
</comment>
<comment type="similarity">
    <text evidence="1">Belongs to the thioester dehydratase family. FabZ subfamily.</text>
</comment>
<gene>
    <name evidence="1" type="primary">fabZ</name>
    <name type="ordered locus">ECED1_0186</name>
</gene>
<feature type="chain" id="PRO_1000134701" description="3-hydroxyacyl-[acyl-carrier-protein] dehydratase FabZ">
    <location>
        <begin position="1"/>
        <end position="151"/>
    </location>
</feature>
<feature type="active site" evidence="1">
    <location>
        <position position="54"/>
    </location>
</feature>
<proteinExistence type="inferred from homology"/>
<protein>
    <recommendedName>
        <fullName evidence="1">3-hydroxyacyl-[acyl-carrier-protein] dehydratase FabZ</fullName>
        <ecNumber evidence="1">4.2.1.59</ecNumber>
    </recommendedName>
    <alternativeName>
        <fullName evidence="1">(3R)-hydroxymyristoyl-[acyl-carrier-protein] dehydratase</fullName>
        <shortName evidence="1">(3R)-hydroxymyristoyl-ACP dehydrase</shortName>
    </alternativeName>
    <alternativeName>
        <fullName evidence="1">Beta-hydroxyacyl-ACP dehydratase</fullName>
    </alternativeName>
</protein>